<feature type="chain" id="PRO_0000182696" description="Gas vesicle protein K2">
    <location>
        <begin position="1"/>
        <end position="119"/>
    </location>
</feature>
<feature type="region of interest" description="Disordered" evidence="2">
    <location>
        <begin position="92"/>
        <end position="119"/>
    </location>
</feature>
<geneLocation type="plasmid">
    <name>pNRC200</name>
</geneLocation>
<comment type="function">
    <text evidence="1 4">Proteins GvpF to GvpM might be involved in nucleating gas vesicle formation (By similarity). Gas vesicles are hollow, gas filled proteinaceous nanostructures found in several microbial planktonic microorganisms. They allow positioning of halobacteria at the optimal depth for growth in the poorly aerated, shallow brine pools of their habitat (PubMed:33711860).</text>
</comment>
<comment type="function">
    <text evidence="6">Expression of 2 c-vac DNA fragments containing 2 divergently transcribed regions (gvpE-gvpF-gvpG-gvpH-gvpI-gvpJ-gvpK-gvpL-gvpM and gvpA-gvpC-gvpN-gvpO) allows H.volcanii to produce gas vesicles.</text>
</comment>
<comment type="subunit">
    <text evidence="1">GvpF to GvpM interact with each other in vitro, and may form multi-subunit complex(es).</text>
</comment>
<comment type="subcellular location">
    <subcellularLocation>
        <location evidence="9">Gas vesicle</location>
    </subcellularLocation>
</comment>
<comment type="induction">
    <text evidence="4 5">In PHH4 (a deletion of the p-vac locus) transcribed in all growth phases, maximal expression in mid-stationary phase. An unstable 6kb transcript able to cover gvpD-gvpE-gvpF-gvpG-gvpH-gvpI-gvpJ-gvpK-gvpL-gvpM is detected, as well as smaller transcripts (PubMed:8763925). Gas vesicles appear earlier when grown in static culture, possibly due to O(2)-limitation (PubMed:33711860).</text>
</comment>
<comment type="miscellaneous">
    <text evidence="3 5">Encoded in a 14-gene locus called c-vac which produces cylindrical gas vesicles only in the stationary growth phase.</text>
</comment>
<comment type="similarity">
    <text evidence="9">Belongs to the gas vesicle GvpK family.</text>
</comment>
<sequence length="119" mass="12738">MEIALDDHDDEDLQSGLTALVVTVVELLVEALEGEAVRRMESGSLSDAEIERLGSQLQALEAELDRLQADQDIEAAVDEFKDDLDHVLRDAITQMSEADSTPGFEPQHSADGDSGGGSA</sequence>
<proteinExistence type="evidence at protein level"/>
<accession>P33963</accession>
<accession>Q9HHT9</accession>
<reference key="1">
    <citation type="journal article" date="1992" name="J. Mol. Biol.">
        <title>Three different but related gene clusters encoding gas vesicles in halophilic archaea.</title>
        <authorList>
            <person name="Englert C."/>
            <person name="Krueger K."/>
            <person name="Offner S."/>
            <person name="Pfeifer F."/>
        </authorList>
    </citation>
    <scope>NUCLEOTIDE SEQUENCE [GENOMIC DNA]</scope>
    <scope>GAS VESICLE GENE CLUSTER</scope>
    <source>
        <strain>NRC-817</strain>
    </source>
</reference>
<reference evidence="11" key="2">
    <citation type="journal article" date="1996" name="J. Bacteriol.">
        <title>Transcript analysis of the c-vac region and differential synthesis of the two regulatory gas vesicle proteins GvpD and GvpE in Halobacterium salinarium PHH4.</title>
        <authorList>
            <person name="Krueger K."/>
            <person name="Pfeifer F."/>
        </authorList>
    </citation>
    <scope>NUCLEOTIDE SEQUENCE [GENOMIC DNA]</scope>
    <scope>INDUCTION</scope>
    <source>
        <strain>PHH1 /PHH4</strain>
    </source>
</reference>
<reference evidence="10" key="3">
    <citation type="journal article" date="2000" name="Proc. Natl. Acad. Sci. U.S.A.">
        <title>Genome sequence of Halobacterium species NRC-1.</title>
        <authorList>
            <person name="Ng W.V."/>
            <person name="Kennedy S.P."/>
            <person name="Mahairas G.G."/>
            <person name="Berquist B."/>
            <person name="Pan M."/>
            <person name="Shukla H.D."/>
            <person name="Lasky S.R."/>
            <person name="Baliga N.S."/>
            <person name="Thorsson V."/>
            <person name="Sbrogna J."/>
            <person name="Swartzell S."/>
            <person name="Weir D."/>
            <person name="Hall J."/>
            <person name="Dahl T.A."/>
            <person name="Welti R."/>
            <person name="Goo Y.A."/>
            <person name="Leithauser B."/>
            <person name="Keller K."/>
            <person name="Cruz R."/>
            <person name="Danson M.J."/>
            <person name="Hough D.W."/>
            <person name="Maddocks D.G."/>
            <person name="Jablonski P.E."/>
            <person name="Krebs M.P."/>
            <person name="Angevine C.M."/>
            <person name="Dale H."/>
            <person name="Isenbarger T.A."/>
            <person name="Peck R.F."/>
            <person name="Pohlschroder M."/>
            <person name="Spudich J.L."/>
            <person name="Jung K.-H."/>
            <person name="Alam M."/>
            <person name="Freitas T."/>
            <person name="Hou S."/>
            <person name="Daniels C.J."/>
            <person name="Dennis P.P."/>
            <person name="Omer A.D."/>
            <person name="Ebhardt H."/>
            <person name="Lowe T.M."/>
            <person name="Liang P."/>
            <person name="Riley M."/>
            <person name="Hood L."/>
            <person name="DasSarma S."/>
        </authorList>
    </citation>
    <scope>NUCLEOTIDE SEQUENCE [LARGE SCALE GENOMIC DNA]</scope>
    <source>
        <strain>ATCC 700922 / JCM 11081 / NRC-1</strain>
        <plasmid>pNRC200</plasmid>
    </source>
</reference>
<reference key="4">
    <citation type="journal article" date="1997" name="Microbiology">
        <title>Growth competition between Halobacterium salinarium strain PHH1 and mutants affected in gas vesicle synthesis.</title>
        <authorList>
            <person name="Beard S.J."/>
            <person name="Hayes P.K."/>
            <person name="Walsby A.E."/>
        </authorList>
    </citation>
    <scope>FUNCTION IN BUOYANCY</scope>
    <scope>POSSIBLE INDUCTION BY OXYGEN LIMITATION</scope>
    <source>
        <strain>PHH1</strain>
    </source>
</reference>
<reference key="5">
    <citation type="journal article" date="1998" name="Microbiology">
        <title>Structural characteristics of halobacterial gas vesicles.</title>
        <authorList>
            <person name="Offner S."/>
            <person name="Ziese U."/>
            <person name="Wanner G."/>
            <person name="Typke D."/>
            <person name="Pfeifer F."/>
        </authorList>
    </citation>
    <scope>FUNCTION</scope>
    <source>
        <strain>PHH1</strain>
    </source>
</reference>
<keyword id="KW-0304">Gas vesicle</keyword>
<keyword id="KW-0614">Plasmid</keyword>
<keyword id="KW-1185">Reference proteome</keyword>
<dbReference type="EMBL" id="X64730">
    <property type="protein sequence ID" value="CAA45986.1"/>
    <property type="molecule type" value="Genomic_DNA"/>
</dbReference>
<dbReference type="EMBL" id="X94688">
    <property type="protein sequence ID" value="CAA64350.1"/>
    <property type="molecule type" value="Genomic_DNA"/>
</dbReference>
<dbReference type="EMBL" id="AE004438">
    <property type="protein sequence ID" value="AAG20887.1"/>
    <property type="molecule type" value="Genomic_DNA"/>
</dbReference>
<dbReference type="RefSeq" id="WP_010904100.1">
    <property type="nucleotide sequence ID" value="NZ_BK010831.1"/>
</dbReference>
<dbReference type="SMR" id="P33963"/>
<dbReference type="KEGG" id="hal:VNG_6230G"/>
<dbReference type="PATRIC" id="fig|64091.14.peg.2235"/>
<dbReference type="HOGENOM" id="CLU_155015_1_0_2"/>
<dbReference type="InParanoid" id="P33963"/>
<dbReference type="OrthoDB" id="275652at2157"/>
<dbReference type="Proteomes" id="UP000000554">
    <property type="component" value="Plasmid pNRC200"/>
</dbReference>
<dbReference type="GO" id="GO:0031411">
    <property type="term" value="C:gas vesicle"/>
    <property type="evidence" value="ECO:0007669"/>
    <property type="project" value="UniProtKB-SubCell"/>
</dbReference>
<dbReference type="GO" id="GO:0031412">
    <property type="term" value="P:gas vesicle organization"/>
    <property type="evidence" value="ECO:0007669"/>
    <property type="project" value="InterPro"/>
</dbReference>
<dbReference type="InterPro" id="IPR007805">
    <property type="entry name" value="GvpK"/>
</dbReference>
<dbReference type="PANTHER" id="PTHR40137">
    <property type="entry name" value="PROTEIN GVPK 1"/>
    <property type="match status" value="1"/>
</dbReference>
<dbReference type="PANTHER" id="PTHR40137:SF2">
    <property type="entry name" value="PROTEIN GVPK 1"/>
    <property type="match status" value="1"/>
</dbReference>
<dbReference type="Pfam" id="PF05121">
    <property type="entry name" value="GvpK"/>
    <property type="match status" value="1"/>
</dbReference>
<gene>
    <name evidence="8" type="primary">gvpK2</name>
    <name evidence="7" type="synonym">c-gvpK</name>
    <name evidence="10" type="ordered locus">VNG_6230G</name>
</gene>
<organism>
    <name type="scientific">Halobacterium salinarum (strain ATCC 700922 / JCM 11081 / NRC-1)</name>
    <name type="common">Halobacterium halobium</name>
    <dbReference type="NCBI Taxonomy" id="64091"/>
    <lineage>
        <taxon>Archaea</taxon>
        <taxon>Methanobacteriati</taxon>
        <taxon>Methanobacteriota</taxon>
        <taxon>Stenosarchaea group</taxon>
        <taxon>Halobacteria</taxon>
        <taxon>Halobacteriales</taxon>
        <taxon>Halobacteriaceae</taxon>
        <taxon>Halobacterium</taxon>
        <taxon>Halobacterium salinarum NRC-34001</taxon>
    </lineage>
</organism>
<name>GVPK2_HALSA</name>
<protein>
    <recommendedName>
        <fullName>Gas vesicle protein K2</fullName>
        <shortName>GvpK2</shortName>
    </recommendedName>
</protein>
<evidence type="ECO:0000250" key="1">
    <source>
        <dbReference type="UniProtKB" id="P24375"/>
    </source>
</evidence>
<evidence type="ECO:0000256" key="2">
    <source>
        <dbReference type="SAM" id="MobiDB-lite"/>
    </source>
</evidence>
<evidence type="ECO:0000269" key="3">
    <source>
    </source>
</evidence>
<evidence type="ECO:0000269" key="4">
    <source>
    </source>
</evidence>
<evidence type="ECO:0000269" key="5">
    <source>
    </source>
</evidence>
<evidence type="ECO:0000269" key="6">
    <source>
    </source>
</evidence>
<evidence type="ECO:0000303" key="7">
    <source>
    </source>
</evidence>
<evidence type="ECO:0000303" key="8">
    <source>
    </source>
</evidence>
<evidence type="ECO:0000305" key="9"/>
<evidence type="ECO:0000312" key="10">
    <source>
        <dbReference type="EMBL" id="AAG20887.1"/>
    </source>
</evidence>
<evidence type="ECO:0000312" key="11">
    <source>
        <dbReference type="EMBL" id="CAA64350.1"/>
    </source>
</evidence>